<keyword id="KW-0029">Amino-acid transport</keyword>
<keyword id="KW-0574">Periplasm</keyword>
<keyword id="KW-1185">Reference proteome</keyword>
<keyword id="KW-0732">Signal</keyword>
<keyword id="KW-0813">Transport</keyword>
<proteinExistence type="evidence at protein level"/>
<evidence type="ECO:0000255" key="1"/>
<evidence type="ECO:0000269" key="2">
    <source>
    </source>
</evidence>
<evidence type="ECO:0000305" key="3"/>
<evidence type="ECO:0000312" key="4">
    <source>
        <dbReference type="EMBL" id="AAG08298.1"/>
    </source>
</evidence>
<reference key="1">
    <citation type="journal article" date="2000" name="Nature">
        <title>Complete genome sequence of Pseudomonas aeruginosa PAO1, an opportunistic pathogen.</title>
        <authorList>
            <person name="Stover C.K."/>
            <person name="Pham X.-Q.T."/>
            <person name="Erwin A.L."/>
            <person name="Mizoguchi S.D."/>
            <person name="Warrener P."/>
            <person name="Hickey M.J."/>
            <person name="Brinkman F.S.L."/>
            <person name="Hufnagle W.O."/>
            <person name="Kowalik D.J."/>
            <person name="Lagrou M."/>
            <person name="Garber R.L."/>
            <person name="Goltry L."/>
            <person name="Tolentino E."/>
            <person name="Westbrock-Wadman S."/>
            <person name="Yuan Y."/>
            <person name="Brody L.L."/>
            <person name="Coulter S.N."/>
            <person name="Folger K.R."/>
            <person name="Kas A."/>
            <person name="Larbig K."/>
            <person name="Lim R.M."/>
            <person name="Smith K.A."/>
            <person name="Spencer D.H."/>
            <person name="Wong G.K.-S."/>
            <person name="Wu Z."/>
            <person name="Paulsen I.T."/>
            <person name="Reizer J."/>
            <person name="Saier M.H. Jr."/>
            <person name="Hancock R.E.W."/>
            <person name="Lory S."/>
            <person name="Olson M.V."/>
        </authorList>
    </citation>
    <scope>NUCLEOTIDE SEQUENCE [LARGE SCALE GENOMIC DNA]</scope>
    <source>
        <strain>ATCC 15692 / DSM 22644 / CIP 104116 / JCM 14847 / LMG 12228 / 1C / PRS 101 / PAO1</strain>
    </source>
</reference>
<reference key="2">
    <citation type="journal article" date="2019" name="Int. J. Mol. Sci.">
        <title>Determination of Ligand Profiles for Pseudomonas aeruginosa Solute Binding Proteins.</title>
        <authorList>
            <person name="Fernandez M."/>
            <person name="Rico-Jimenez M."/>
            <person name="Ortega A."/>
            <person name="Daddaoua A."/>
            <person name="Garcia Garcia A.I."/>
            <person name="Martin-Mora D."/>
            <person name="Torres N.M."/>
            <person name="Tajuelo A."/>
            <person name="Matilla M.A."/>
            <person name="Krell T."/>
        </authorList>
    </citation>
    <scope>FUNCTION AS A BINDING PROTEIN</scope>
    <source>
        <strain>ATCC 15692 / DSM 22644 / CIP 104116 / JCM 14847 / LMG 12228 / 1C / PRS 101 / PAO1</strain>
    </source>
</reference>
<comment type="function">
    <text evidence="2">Binds primarily proteinogenic amino acids.</text>
</comment>
<comment type="subcellular location">
    <subcellularLocation>
        <location evidence="3">Periplasm</location>
    </subcellularLocation>
</comment>
<comment type="similarity">
    <text evidence="3">Belongs to the leucine-binding protein family.</text>
</comment>
<organism>
    <name type="scientific">Pseudomonas aeruginosa (strain ATCC 15692 / DSM 22644 / CIP 104116 / JCM 14847 / LMG 12228 / 1C / PRS 101 / PAO1)</name>
    <dbReference type="NCBI Taxonomy" id="208964"/>
    <lineage>
        <taxon>Bacteria</taxon>
        <taxon>Pseudomonadati</taxon>
        <taxon>Pseudomonadota</taxon>
        <taxon>Gammaproteobacteria</taxon>
        <taxon>Pseudomonadales</taxon>
        <taxon>Pseudomonadaceae</taxon>
        <taxon>Pseudomonas</taxon>
    </lineage>
</organism>
<protein>
    <recommendedName>
        <fullName evidence="3">Amino acid binding protein</fullName>
    </recommendedName>
</protein>
<sequence>MSKKLFRKGILALAVSSVMGLSTHALADVVIGVAGPHTGANASFGEQYWRGASQAAEDINAAGGINGEKIKLVKADDACEPKQAVAVANRLVDQDKAIAVVGHFCSSSTIPASEVYDEAGIIAITPGSTNPQVTERGLSGMFRMCGRDDQQGVVAGDYIVNVLKAKKVAVIHDKDTYGQGLADATRAQLNKLGVKEVLYEGLTRGEKDFNALVTKIRASGAEVVYFGGLHPEAGPLVRQMREQGLTARFMSDDGVVTDELATTAGGPQYVKGVLMTFGADPRLIPDGKAVVEKFRAGGFEPEGYTLYSYASIQSLAAAFNGAGANDPAKAAEWLKSHPVQTVMGKKEWDKKGDLKVSDYVVYEWDDKGKYHQLP</sequence>
<dbReference type="EMBL" id="AE004091">
    <property type="protein sequence ID" value="AAG08298.1"/>
    <property type="molecule type" value="Genomic_DNA"/>
</dbReference>
<dbReference type="PIR" id="C83032">
    <property type="entry name" value="C83032"/>
</dbReference>
<dbReference type="RefSeq" id="NP_253600.1">
    <property type="nucleotide sequence ID" value="NC_002516.2"/>
</dbReference>
<dbReference type="RefSeq" id="WP_003099985.1">
    <property type="nucleotide sequence ID" value="NZ_QZGE01000002.1"/>
</dbReference>
<dbReference type="SMR" id="Q9HUQ0"/>
<dbReference type="STRING" id="208964.PA4913"/>
<dbReference type="PaxDb" id="208964-PA4913"/>
<dbReference type="GeneID" id="878522"/>
<dbReference type="KEGG" id="pae:PA4913"/>
<dbReference type="PATRIC" id="fig|208964.12.peg.5146"/>
<dbReference type="PseudoCAP" id="PA4913"/>
<dbReference type="HOGENOM" id="CLU_027128_6_0_6"/>
<dbReference type="InParanoid" id="Q9HUQ0"/>
<dbReference type="OrthoDB" id="9768386at2"/>
<dbReference type="PhylomeDB" id="Q9HUQ0"/>
<dbReference type="BioCyc" id="PAER208964:G1FZ6-5027-MONOMER"/>
<dbReference type="Proteomes" id="UP000002438">
    <property type="component" value="Chromosome"/>
</dbReference>
<dbReference type="GO" id="GO:0030288">
    <property type="term" value="C:outer membrane-bounded periplasmic space"/>
    <property type="evidence" value="ECO:0000318"/>
    <property type="project" value="GO_Central"/>
</dbReference>
<dbReference type="GO" id="GO:0015818">
    <property type="term" value="P:isoleucine transport"/>
    <property type="evidence" value="ECO:0000318"/>
    <property type="project" value="GO_Central"/>
</dbReference>
<dbReference type="GO" id="GO:0015820">
    <property type="term" value="P:L-leucine transport"/>
    <property type="evidence" value="ECO:0000318"/>
    <property type="project" value="GO_Central"/>
</dbReference>
<dbReference type="GO" id="GO:0015829">
    <property type="term" value="P:valine transport"/>
    <property type="evidence" value="ECO:0000318"/>
    <property type="project" value="GO_Central"/>
</dbReference>
<dbReference type="CDD" id="cd06342">
    <property type="entry name" value="PBP1_ABC_LIVBP-like"/>
    <property type="match status" value="1"/>
</dbReference>
<dbReference type="Gene3D" id="3.40.50.2300">
    <property type="match status" value="2"/>
</dbReference>
<dbReference type="InterPro" id="IPR028081">
    <property type="entry name" value="Leu-bd"/>
</dbReference>
<dbReference type="InterPro" id="IPR000709">
    <property type="entry name" value="Leu_Ile_Val-bd"/>
</dbReference>
<dbReference type="InterPro" id="IPR028082">
    <property type="entry name" value="Peripla_BP_I"/>
</dbReference>
<dbReference type="PANTHER" id="PTHR47151:SF2">
    <property type="entry name" value="AMINO ACID BINDING PROTEIN"/>
    <property type="match status" value="1"/>
</dbReference>
<dbReference type="PANTHER" id="PTHR47151">
    <property type="entry name" value="LEU/ILE/VAL-BINDING ABC TRANSPORTER SUBUNIT"/>
    <property type="match status" value="1"/>
</dbReference>
<dbReference type="Pfam" id="PF13458">
    <property type="entry name" value="Peripla_BP_6"/>
    <property type="match status" value="1"/>
</dbReference>
<dbReference type="PRINTS" id="PR00337">
    <property type="entry name" value="LEUILEVALBP"/>
</dbReference>
<dbReference type="SUPFAM" id="SSF53822">
    <property type="entry name" value="Periplasmic binding protein-like I"/>
    <property type="match status" value="1"/>
</dbReference>
<gene>
    <name evidence="4" type="ordered locus">PA4913</name>
</gene>
<accession>Q9HUQ0</accession>
<feature type="signal peptide" evidence="1">
    <location>
        <begin position="1"/>
        <end position="27"/>
    </location>
</feature>
<feature type="chain" id="PRO_5004326797" description="Amino acid binding protein" evidence="1">
    <location>
        <begin position="28"/>
        <end position="374"/>
    </location>
</feature>
<name>AABP_PSEAE</name>